<sequence length="95" mass="10583">MSDPLRELFDVIEDRKETMPENSYTASLLADDEKGENAALEKVGEEATEFLLAAKDGDTDELAHEGADVVYHMLVVLAQQDMDVEALLAELDDRR</sequence>
<comment type="catalytic activity">
    <reaction evidence="1">
        <text>1-(5-phospho-beta-D-ribosyl)-ATP + H2O = 1-(5-phospho-beta-D-ribosyl)-5'-AMP + diphosphate + H(+)</text>
        <dbReference type="Rhea" id="RHEA:22828"/>
        <dbReference type="ChEBI" id="CHEBI:15377"/>
        <dbReference type="ChEBI" id="CHEBI:15378"/>
        <dbReference type="ChEBI" id="CHEBI:33019"/>
        <dbReference type="ChEBI" id="CHEBI:59457"/>
        <dbReference type="ChEBI" id="CHEBI:73183"/>
        <dbReference type="EC" id="3.6.1.31"/>
    </reaction>
</comment>
<comment type="pathway">
    <text evidence="1">Amino-acid biosynthesis; L-histidine biosynthesis; L-histidine from 5-phospho-alpha-D-ribose 1-diphosphate: step 2/9.</text>
</comment>
<comment type="subcellular location">
    <subcellularLocation>
        <location evidence="1">Cytoplasm</location>
    </subcellularLocation>
</comment>
<comment type="similarity">
    <text evidence="1">Belongs to the PRA-PH family.</text>
</comment>
<protein>
    <recommendedName>
        <fullName evidence="1">Phosphoribosyl-ATP pyrophosphatase</fullName>
        <shortName evidence="1">PRA-PH</shortName>
        <ecNumber evidence="1">3.6.1.31</ecNumber>
    </recommendedName>
</protein>
<evidence type="ECO:0000255" key="1">
    <source>
        <dbReference type="HAMAP-Rule" id="MF_01020"/>
    </source>
</evidence>
<reference key="1">
    <citation type="journal article" date="2008" name="Genomics">
        <title>Evolution in the laboratory: the genome of Halobacterium salinarum strain R1 compared to that of strain NRC-1.</title>
        <authorList>
            <person name="Pfeiffer F."/>
            <person name="Schuster S.C."/>
            <person name="Broicher A."/>
            <person name="Falb M."/>
            <person name="Palm P."/>
            <person name="Rodewald K."/>
            <person name="Ruepp A."/>
            <person name="Soppa J."/>
            <person name="Tittor J."/>
            <person name="Oesterhelt D."/>
        </authorList>
    </citation>
    <scope>NUCLEOTIDE SEQUENCE [LARGE SCALE GENOMIC DNA]</scope>
    <source>
        <strain>ATCC 29341 / DSM 671 / R1</strain>
    </source>
</reference>
<organism>
    <name type="scientific">Halobacterium salinarum (strain ATCC 29341 / DSM 671 / R1)</name>
    <dbReference type="NCBI Taxonomy" id="478009"/>
    <lineage>
        <taxon>Archaea</taxon>
        <taxon>Methanobacteriati</taxon>
        <taxon>Methanobacteriota</taxon>
        <taxon>Stenosarchaea group</taxon>
        <taxon>Halobacteria</taxon>
        <taxon>Halobacteriales</taxon>
        <taxon>Halobacteriaceae</taxon>
        <taxon>Halobacterium</taxon>
        <taxon>Halobacterium salinarum NRC-34001</taxon>
    </lineage>
</organism>
<keyword id="KW-0028">Amino-acid biosynthesis</keyword>
<keyword id="KW-0067">ATP-binding</keyword>
<keyword id="KW-0963">Cytoplasm</keyword>
<keyword id="KW-0368">Histidine biosynthesis</keyword>
<keyword id="KW-0378">Hydrolase</keyword>
<keyword id="KW-0547">Nucleotide-binding</keyword>
<name>HIS2_HALS3</name>
<dbReference type="EC" id="3.6.1.31" evidence="1"/>
<dbReference type="EMBL" id="AM774415">
    <property type="protein sequence ID" value="CAP14946.1"/>
    <property type="molecule type" value="Genomic_DNA"/>
</dbReference>
<dbReference type="RefSeq" id="WP_010903939.1">
    <property type="nucleotide sequence ID" value="NC_010364.1"/>
</dbReference>
<dbReference type="SMR" id="B0R877"/>
<dbReference type="EnsemblBacteria" id="CAP14946">
    <property type="protein sequence ID" value="CAP14946"/>
    <property type="gene ID" value="OE_4641R"/>
</dbReference>
<dbReference type="GeneID" id="89348580"/>
<dbReference type="KEGG" id="hsl:OE_4641R"/>
<dbReference type="HOGENOM" id="CLU_123337_0_0_2"/>
<dbReference type="PhylomeDB" id="B0R877"/>
<dbReference type="UniPathway" id="UPA00031">
    <property type="reaction ID" value="UER00007"/>
</dbReference>
<dbReference type="Proteomes" id="UP000001321">
    <property type="component" value="Chromosome"/>
</dbReference>
<dbReference type="GO" id="GO:0005737">
    <property type="term" value="C:cytoplasm"/>
    <property type="evidence" value="ECO:0007669"/>
    <property type="project" value="UniProtKB-SubCell"/>
</dbReference>
<dbReference type="GO" id="GO:0005524">
    <property type="term" value="F:ATP binding"/>
    <property type="evidence" value="ECO:0007669"/>
    <property type="project" value="UniProtKB-KW"/>
</dbReference>
<dbReference type="GO" id="GO:0004636">
    <property type="term" value="F:phosphoribosyl-ATP diphosphatase activity"/>
    <property type="evidence" value="ECO:0007669"/>
    <property type="project" value="UniProtKB-UniRule"/>
</dbReference>
<dbReference type="GO" id="GO:0000105">
    <property type="term" value="P:L-histidine biosynthetic process"/>
    <property type="evidence" value="ECO:0007669"/>
    <property type="project" value="UniProtKB-UniRule"/>
</dbReference>
<dbReference type="CDD" id="cd11534">
    <property type="entry name" value="NTP-PPase_HisIE_like"/>
    <property type="match status" value="1"/>
</dbReference>
<dbReference type="FunFam" id="1.10.287.1080:FF:000002">
    <property type="entry name" value="Histidine biosynthesis bifunctional protein HisIE"/>
    <property type="match status" value="1"/>
</dbReference>
<dbReference type="Gene3D" id="1.10.287.1080">
    <property type="entry name" value="MazG-like"/>
    <property type="match status" value="1"/>
</dbReference>
<dbReference type="HAMAP" id="MF_01020">
    <property type="entry name" value="HisE"/>
    <property type="match status" value="1"/>
</dbReference>
<dbReference type="InterPro" id="IPR008179">
    <property type="entry name" value="HisE"/>
</dbReference>
<dbReference type="InterPro" id="IPR021130">
    <property type="entry name" value="PRib-ATP_PPHydrolase-like"/>
</dbReference>
<dbReference type="NCBIfam" id="TIGR03188">
    <property type="entry name" value="histidine_hisI"/>
    <property type="match status" value="1"/>
</dbReference>
<dbReference type="PANTHER" id="PTHR42945">
    <property type="entry name" value="HISTIDINE BIOSYNTHESIS BIFUNCTIONAL PROTEIN"/>
    <property type="match status" value="1"/>
</dbReference>
<dbReference type="PANTHER" id="PTHR42945:SF1">
    <property type="entry name" value="HISTIDINE BIOSYNTHESIS BIFUNCTIONAL PROTEIN HIS7"/>
    <property type="match status" value="1"/>
</dbReference>
<dbReference type="Pfam" id="PF01503">
    <property type="entry name" value="PRA-PH"/>
    <property type="match status" value="1"/>
</dbReference>
<dbReference type="SUPFAM" id="SSF101386">
    <property type="entry name" value="all-alpha NTP pyrophosphatases"/>
    <property type="match status" value="1"/>
</dbReference>
<accession>B0R877</accession>
<feature type="chain" id="PRO_1000135310" description="Phosphoribosyl-ATP pyrophosphatase">
    <location>
        <begin position="1"/>
        <end position="95"/>
    </location>
</feature>
<proteinExistence type="inferred from homology"/>
<gene>
    <name evidence="1" type="primary">hisE</name>
    <name type="ordered locus">OE_4641R</name>
</gene>